<proteinExistence type="inferred from homology"/>
<gene>
    <name evidence="1" type="primary">aroQ</name>
    <name type="ordered locus">Moth_1540</name>
</gene>
<name>AROQ_MOOTA</name>
<feature type="chain" id="PRO_1000023485" description="3-dehydroquinate dehydratase">
    <location>
        <begin position="1"/>
        <end position="156"/>
    </location>
</feature>
<feature type="active site" description="Proton acceptor" evidence="1">
    <location>
        <position position="22"/>
    </location>
</feature>
<feature type="active site" description="Proton donor" evidence="1">
    <location>
        <position position="99"/>
    </location>
</feature>
<feature type="binding site" evidence="1">
    <location>
        <position position="73"/>
    </location>
    <ligand>
        <name>substrate</name>
    </ligand>
</feature>
<feature type="binding site" evidence="1">
    <location>
        <position position="79"/>
    </location>
    <ligand>
        <name>substrate</name>
    </ligand>
</feature>
<feature type="binding site" evidence="1">
    <location>
        <position position="86"/>
    </location>
    <ligand>
        <name>substrate</name>
    </ligand>
</feature>
<feature type="binding site" evidence="1">
    <location>
        <begin position="100"/>
        <end position="101"/>
    </location>
    <ligand>
        <name>substrate</name>
    </ligand>
</feature>
<feature type="binding site" evidence="1">
    <location>
        <position position="110"/>
    </location>
    <ligand>
        <name>substrate</name>
    </ligand>
</feature>
<feature type="site" description="Transition state stabilizer" evidence="1">
    <location>
        <position position="17"/>
    </location>
</feature>
<keyword id="KW-0028">Amino-acid biosynthesis</keyword>
<keyword id="KW-0057">Aromatic amino acid biosynthesis</keyword>
<keyword id="KW-0456">Lyase</keyword>
<comment type="function">
    <text evidence="1">Catalyzes a trans-dehydration via an enolate intermediate.</text>
</comment>
<comment type="catalytic activity">
    <reaction evidence="1">
        <text>3-dehydroquinate = 3-dehydroshikimate + H2O</text>
        <dbReference type="Rhea" id="RHEA:21096"/>
        <dbReference type="ChEBI" id="CHEBI:15377"/>
        <dbReference type="ChEBI" id="CHEBI:16630"/>
        <dbReference type="ChEBI" id="CHEBI:32364"/>
        <dbReference type="EC" id="4.2.1.10"/>
    </reaction>
</comment>
<comment type="pathway">
    <text evidence="1">Metabolic intermediate biosynthesis; chorismate biosynthesis; chorismate from D-erythrose 4-phosphate and phosphoenolpyruvate: step 3/7.</text>
</comment>
<comment type="subunit">
    <text evidence="1">Homododecamer.</text>
</comment>
<comment type="similarity">
    <text evidence="1">Belongs to the type-II 3-dehydroquinase family.</text>
</comment>
<accession>Q2RI90</accession>
<sequence length="156" mass="16879">MKILVINGPNLNLLGNREPETYGRTTLATIEAELRRQASQAGVEIEFFQSNHEGALIDCLHAARGRVDAAVINPGALGHYSIALRDALAAVDYPAVEVHLSNIYRREEFRHHTVTAAVVAGQISGFGPLSYRLGLEAAIELARRRREAPPDGGSNG</sequence>
<evidence type="ECO:0000255" key="1">
    <source>
        <dbReference type="HAMAP-Rule" id="MF_00169"/>
    </source>
</evidence>
<organism>
    <name type="scientific">Moorella thermoacetica (strain ATCC 39073 / JCM 9320)</name>
    <dbReference type="NCBI Taxonomy" id="264732"/>
    <lineage>
        <taxon>Bacteria</taxon>
        <taxon>Bacillati</taxon>
        <taxon>Bacillota</taxon>
        <taxon>Clostridia</taxon>
        <taxon>Moorellales</taxon>
        <taxon>Moorellaceae</taxon>
        <taxon>Moorella</taxon>
    </lineage>
</organism>
<reference key="1">
    <citation type="journal article" date="2008" name="Environ. Microbiol.">
        <title>The complete genome sequence of Moorella thermoacetica (f. Clostridium thermoaceticum).</title>
        <authorList>
            <person name="Pierce E."/>
            <person name="Xie G."/>
            <person name="Barabote R.D."/>
            <person name="Saunders E."/>
            <person name="Han C.S."/>
            <person name="Detter J.C."/>
            <person name="Richardson P."/>
            <person name="Brettin T.S."/>
            <person name="Das A."/>
            <person name="Ljungdahl L.G."/>
            <person name="Ragsdale S.W."/>
        </authorList>
    </citation>
    <scope>NUCLEOTIDE SEQUENCE [LARGE SCALE GENOMIC DNA]</scope>
    <source>
        <strain>ATCC 39073 / JCM 9320</strain>
    </source>
</reference>
<dbReference type="EC" id="4.2.1.10" evidence="1"/>
<dbReference type="EMBL" id="CP000232">
    <property type="protein sequence ID" value="ABC19849.1"/>
    <property type="molecule type" value="Genomic_DNA"/>
</dbReference>
<dbReference type="RefSeq" id="YP_430392.1">
    <property type="nucleotide sequence ID" value="NC_007644.1"/>
</dbReference>
<dbReference type="SMR" id="Q2RI90"/>
<dbReference type="STRING" id="264732.Moth_1540"/>
<dbReference type="EnsemblBacteria" id="ABC19849">
    <property type="protein sequence ID" value="ABC19849"/>
    <property type="gene ID" value="Moth_1540"/>
</dbReference>
<dbReference type="KEGG" id="mta:Moth_1540"/>
<dbReference type="PATRIC" id="fig|264732.11.peg.1666"/>
<dbReference type="eggNOG" id="COG0757">
    <property type="taxonomic scope" value="Bacteria"/>
</dbReference>
<dbReference type="HOGENOM" id="CLU_090968_1_0_9"/>
<dbReference type="OrthoDB" id="9790793at2"/>
<dbReference type="UniPathway" id="UPA00053">
    <property type="reaction ID" value="UER00086"/>
</dbReference>
<dbReference type="GO" id="GO:0003855">
    <property type="term" value="F:3-dehydroquinate dehydratase activity"/>
    <property type="evidence" value="ECO:0007669"/>
    <property type="project" value="UniProtKB-UniRule"/>
</dbReference>
<dbReference type="GO" id="GO:0008652">
    <property type="term" value="P:amino acid biosynthetic process"/>
    <property type="evidence" value="ECO:0007669"/>
    <property type="project" value="UniProtKB-KW"/>
</dbReference>
<dbReference type="GO" id="GO:0009073">
    <property type="term" value="P:aromatic amino acid family biosynthetic process"/>
    <property type="evidence" value="ECO:0007669"/>
    <property type="project" value="UniProtKB-KW"/>
</dbReference>
<dbReference type="GO" id="GO:0009423">
    <property type="term" value="P:chorismate biosynthetic process"/>
    <property type="evidence" value="ECO:0007669"/>
    <property type="project" value="UniProtKB-UniRule"/>
</dbReference>
<dbReference type="GO" id="GO:0019631">
    <property type="term" value="P:quinate catabolic process"/>
    <property type="evidence" value="ECO:0007669"/>
    <property type="project" value="TreeGrafter"/>
</dbReference>
<dbReference type="CDD" id="cd00466">
    <property type="entry name" value="DHQase_II"/>
    <property type="match status" value="1"/>
</dbReference>
<dbReference type="Gene3D" id="3.40.50.9100">
    <property type="entry name" value="Dehydroquinase, class II"/>
    <property type="match status" value="1"/>
</dbReference>
<dbReference type="HAMAP" id="MF_00169">
    <property type="entry name" value="AroQ"/>
    <property type="match status" value="1"/>
</dbReference>
<dbReference type="InterPro" id="IPR001874">
    <property type="entry name" value="DHquinase_II"/>
</dbReference>
<dbReference type="InterPro" id="IPR018509">
    <property type="entry name" value="DHquinase_II_CS"/>
</dbReference>
<dbReference type="InterPro" id="IPR036441">
    <property type="entry name" value="DHquinase_II_sf"/>
</dbReference>
<dbReference type="NCBIfam" id="TIGR01088">
    <property type="entry name" value="aroQ"/>
    <property type="match status" value="1"/>
</dbReference>
<dbReference type="NCBIfam" id="NF003805">
    <property type="entry name" value="PRK05395.1-2"/>
    <property type="match status" value="1"/>
</dbReference>
<dbReference type="NCBIfam" id="NF003806">
    <property type="entry name" value="PRK05395.1-3"/>
    <property type="match status" value="1"/>
</dbReference>
<dbReference type="NCBIfam" id="NF003807">
    <property type="entry name" value="PRK05395.1-4"/>
    <property type="match status" value="1"/>
</dbReference>
<dbReference type="PANTHER" id="PTHR21272">
    <property type="entry name" value="CATABOLIC 3-DEHYDROQUINASE"/>
    <property type="match status" value="1"/>
</dbReference>
<dbReference type="PANTHER" id="PTHR21272:SF3">
    <property type="entry name" value="CATABOLIC 3-DEHYDROQUINASE"/>
    <property type="match status" value="1"/>
</dbReference>
<dbReference type="Pfam" id="PF01220">
    <property type="entry name" value="DHquinase_II"/>
    <property type="match status" value="1"/>
</dbReference>
<dbReference type="PIRSF" id="PIRSF001399">
    <property type="entry name" value="DHquinase_II"/>
    <property type="match status" value="1"/>
</dbReference>
<dbReference type="SUPFAM" id="SSF52304">
    <property type="entry name" value="Type II 3-dehydroquinate dehydratase"/>
    <property type="match status" value="1"/>
</dbReference>
<dbReference type="PROSITE" id="PS01029">
    <property type="entry name" value="DEHYDROQUINASE_II"/>
    <property type="match status" value="1"/>
</dbReference>
<protein>
    <recommendedName>
        <fullName evidence="1">3-dehydroquinate dehydratase</fullName>
        <shortName evidence="1">3-dehydroquinase</shortName>
        <ecNumber evidence="1">4.2.1.10</ecNumber>
    </recommendedName>
    <alternativeName>
        <fullName evidence="1">Type II DHQase</fullName>
    </alternativeName>
</protein>